<name>GATB_DEHMC</name>
<evidence type="ECO:0000255" key="1">
    <source>
        <dbReference type="HAMAP-Rule" id="MF_00121"/>
    </source>
</evidence>
<gene>
    <name evidence="1" type="primary">gatB</name>
    <name type="ordered locus">cbdbA1643</name>
</gene>
<accession>Q3ZW41</accession>
<keyword id="KW-0067">ATP-binding</keyword>
<keyword id="KW-0436">Ligase</keyword>
<keyword id="KW-0547">Nucleotide-binding</keyword>
<keyword id="KW-0648">Protein biosynthesis</keyword>
<protein>
    <recommendedName>
        <fullName evidence="1">Aspartyl/glutamyl-tRNA(Asn/Gln) amidotransferase subunit B</fullName>
        <shortName evidence="1">Asp/Glu-ADT subunit B</shortName>
        <ecNumber evidence="1">6.3.5.-</ecNumber>
    </recommendedName>
</protein>
<proteinExistence type="inferred from homology"/>
<feature type="chain" id="PRO_0000241215" description="Aspartyl/glutamyl-tRNA(Asn/Gln) amidotransferase subunit B">
    <location>
        <begin position="1"/>
        <end position="492"/>
    </location>
</feature>
<dbReference type="EC" id="6.3.5.-" evidence="1"/>
<dbReference type="EMBL" id="AJ965256">
    <property type="protein sequence ID" value="CAI83657.1"/>
    <property type="molecule type" value="Genomic_DNA"/>
</dbReference>
<dbReference type="RefSeq" id="WP_011309995.1">
    <property type="nucleotide sequence ID" value="NC_007356.1"/>
</dbReference>
<dbReference type="SMR" id="Q3ZW41"/>
<dbReference type="KEGG" id="deh:cbdbA1643"/>
<dbReference type="HOGENOM" id="CLU_019240_0_0_0"/>
<dbReference type="Proteomes" id="UP000000433">
    <property type="component" value="Chromosome"/>
</dbReference>
<dbReference type="GO" id="GO:0050566">
    <property type="term" value="F:asparaginyl-tRNA synthase (glutamine-hydrolyzing) activity"/>
    <property type="evidence" value="ECO:0007669"/>
    <property type="project" value="RHEA"/>
</dbReference>
<dbReference type="GO" id="GO:0005524">
    <property type="term" value="F:ATP binding"/>
    <property type="evidence" value="ECO:0007669"/>
    <property type="project" value="UniProtKB-KW"/>
</dbReference>
<dbReference type="GO" id="GO:0050567">
    <property type="term" value="F:glutaminyl-tRNA synthase (glutamine-hydrolyzing) activity"/>
    <property type="evidence" value="ECO:0007669"/>
    <property type="project" value="UniProtKB-UniRule"/>
</dbReference>
<dbReference type="GO" id="GO:0070681">
    <property type="term" value="P:glutaminyl-tRNAGln biosynthesis via transamidation"/>
    <property type="evidence" value="ECO:0007669"/>
    <property type="project" value="TreeGrafter"/>
</dbReference>
<dbReference type="GO" id="GO:0006412">
    <property type="term" value="P:translation"/>
    <property type="evidence" value="ECO:0007669"/>
    <property type="project" value="UniProtKB-UniRule"/>
</dbReference>
<dbReference type="FunFam" id="1.10.10.410:FF:000001">
    <property type="entry name" value="Aspartyl/glutamyl-tRNA(Asn/Gln) amidotransferase subunit B"/>
    <property type="match status" value="1"/>
</dbReference>
<dbReference type="Gene3D" id="1.10.10.410">
    <property type="match status" value="1"/>
</dbReference>
<dbReference type="Gene3D" id="1.10.150.380">
    <property type="entry name" value="GatB domain, N-terminal subdomain"/>
    <property type="match status" value="1"/>
</dbReference>
<dbReference type="HAMAP" id="MF_00121">
    <property type="entry name" value="GatB"/>
    <property type="match status" value="1"/>
</dbReference>
<dbReference type="InterPro" id="IPR017959">
    <property type="entry name" value="Asn/Gln-tRNA_amidoTrfase_suB/E"/>
</dbReference>
<dbReference type="InterPro" id="IPR006075">
    <property type="entry name" value="Asn/Gln-tRNA_Trfase_suB/E_cat"/>
</dbReference>
<dbReference type="InterPro" id="IPR018027">
    <property type="entry name" value="Asn/Gln_amidotransferase"/>
</dbReference>
<dbReference type="InterPro" id="IPR003789">
    <property type="entry name" value="Asn/Gln_tRNA_amidoTrase-B-like"/>
</dbReference>
<dbReference type="InterPro" id="IPR004413">
    <property type="entry name" value="GatB"/>
</dbReference>
<dbReference type="InterPro" id="IPR042114">
    <property type="entry name" value="GatB_C_1"/>
</dbReference>
<dbReference type="InterPro" id="IPR023168">
    <property type="entry name" value="GatB_Yqey_C_2"/>
</dbReference>
<dbReference type="InterPro" id="IPR017958">
    <property type="entry name" value="Gln-tRNA_amidoTrfase_suB_CS"/>
</dbReference>
<dbReference type="InterPro" id="IPR014746">
    <property type="entry name" value="Gln_synth/guanido_kin_cat_dom"/>
</dbReference>
<dbReference type="NCBIfam" id="TIGR00133">
    <property type="entry name" value="gatB"/>
    <property type="match status" value="1"/>
</dbReference>
<dbReference type="NCBIfam" id="NF004012">
    <property type="entry name" value="PRK05477.1-2"/>
    <property type="match status" value="1"/>
</dbReference>
<dbReference type="NCBIfam" id="NF004014">
    <property type="entry name" value="PRK05477.1-4"/>
    <property type="match status" value="1"/>
</dbReference>
<dbReference type="PANTHER" id="PTHR11659">
    <property type="entry name" value="GLUTAMYL-TRNA GLN AMIDOTRANSFERASE SUBUNIT B MITOCHONDRIAL AND PROKARYOTIC PET112-RELATED"/>
    <property type="match status" value="1"/>
</dbReference>
<dbReference type="PANTHER" id="PTHR11659:SF0">
    <property type="entry name" value="GLUTAMYL-TRNA(GLN) AMIDOTRANSFERASE SUBUNIT B, MITOCHONDRIAL"/>
    <property type="match status" value="1"/>
</dbReference>
<dbReference type="Pfam" id="PF02934">
    <property type="entry name" value="GatB_N"/>
    <property type="match status" value="1"/>
</dbReference>
<dbReference type="Pfam" id="PF02637">
    <property type="entry name" value="GatB_Yqey"/>
    <property type="match status" value="1"/>
</dbReference>
<dbReference type="SMART" id="SM00845">
    <property type="entry name" value="GatB_Yqey"/>
    <property type="match status" value="1"/>
</dbReference>
<dbReference type="SUPFAM" id="SSF89095">
    <property type="entry name" value="GatB/YqeY motif"/>
    <property type="match status" value="1"/>
</dbReference>
<dbReference type="SUPFAM" id="SSF55931">
    <property type="entry name" value="Glutamine synthetase/guanido kinase"/>
    <property type="match status" value="1"/>
</dbReference>
<dbReference type="PROSITE" id="PS01234">
    <property type="entry name" value="GATB"/>
    <property type="match status" value="1"/>
</dbReference>
<organism>
    <name type="scientific">Dehalococcoides mccartyi (strain CBDB1)</name>
    <dbReference type="NCBI Taxonomy" id="255470"/>
    <lineage>
        <taxon>Bacteria</taxon>
        <taxon>Bacillati</taxon>
        <taxon>Chloroflexota</taxon>
        <taxon>Dehalococcoidia</taxon>
        <taxon>Dehalococcoidales</taxon>
        <taxon>Dehalococcoidaceae</taxon>
        <taxon>Dehalococcoides</taxon>
    </lineage>
</organism>
<reference key="1">
    <citation type="journal article" date="2005" name="Nat. Biotechnol.">
        <title>Genome sequence of the chlorinated compound-respiring bacterium Dehalococcoides species strain CBDB1.</title>
        <authorList>
            <person name="Kube M."/>
            <person name="Beck A."/>
            <person name="Zinder S.H."/>
            <person name="Kuhl H."/>
            <person name="Reinhardt R."/>
            <person name="Adrian L."/>
        </authorList>
    </citation>
    <scope>NUCLEOTIDE SEQUENCE [LARGE SCALE GENOMIC DNA]</scope>
    <source>
        <strain>CBDB1</strain>
    </source>
</reference>
<sequence>MTKYETVIGLEVHVQLDTKSKMFCRCSTDYASAEPNTHVCPVCLGMPGVLPTINKQAVEYTIMSGLALGCDIAPFTKFDRKNYAYPDLMKGYQISQYDQPLCGKGFLDINVDGVIRRIGITRIHLEEDVAKLHHESDINGQPYSLLDINRSSIPLMEVVSEPDMRTPEEARQYLMKLRTIMRYLGVSTANMEEGSFRCDANISIRPVGATELGAKVEVKNMNSFKAVFSALEYEEVRQRKMADEGKKISQETRGWQDEKCQTVSQRSKEFAHDYRYFPEPDLPPLHISCDWIEDIRAKLPELPETRKERFINGYWLSEYDASLLTASRELADYFEAVLGETDFQNIPQDKGVKEVANWVVGSVNSIMNTGGADITAFALKVSPASLCHLLVLVSAGKVNAATAKAVLEDMYATGQNAEAIIEKKGLSQISDSSELVAIAKKVLADNPKAVAEYNEGKTQVIGFLVGQMMKQSKGRANPNIAMELLKKALEEG</sequence>
<comment type="function">
    <text evidence="1">Allows the formation of correctly charged Asn-tRNA(Asn) or Gln-tRNA(Gln) through the transamidation of misacylated Asp-tRNA(Asn) or Glu-tRNA(Gln) in organisms which lack either or both of asparaginyl-tRNA or glutaminyl-tRNA synthetases. The reaction takes place in the presence of glutamine and ATP through an activated phospho-Asp-tRNA(Asn) or phospho-Glu-tRNA(Gln).</text>
</comment>
<comment type="catalytic activity">
    <reaction evidence="1">
        <text>L-glutamyl-tRNA(Gln) + L-glutamine + ATP + H2O = L-glutaminyl-tRNA(Gln) + L-glutamate + ADP + phosphate + H(+)</text>
        <dbReference type="Rhea" id="RHEA:17521"/>
        <dbReference type="Rhea" id="RHEA-COMP:9681"/>
        <dbReference type="Rhea" id="RHEA-COMP:9684"/>
        <dbReference type="ChEBI" id="CHEBI:15377"/>
        <dbReference type="ChEBI" id="CHEBI:15378"/>
        <dbReference type="ChEBI" id="CHEBI:29985"/>
        <dbReference type="ChEBI" id="CHEBI:30616"/>
        <dbReference type="ChEBI" id="CHEBI:43474"/>
        <dbReference type="ChEBI" id="CHEBI:58359"/>
        <dbReference type="ChEBI" id="CHEBI:78520"/>
        <dbReference type="ChEBI" id="CHEBI:78521"/>
        <dbReference type="ChEBI" id="CHEBI:456216"/>
    </reaction>
</comment>
<comment type="catalytic activity">
    <reaction evidence="1">
        <text>L-aspartyl-tRNA(Asn) + L-glutamine + ATP + H2O = L-asparaginyl-tRNA(Asn) + L-glutamate + ADP + phosphate + 2 H(+)</text>
        <dbReference type="Rhea" id="RHEA:14513"/>
        <dbReference type="Rhea" id="RHEA-COMP:9674"/>
        <dbReference type="Rhea" id="RHEA-COMP:9677"/>
        <dbReference type="ChEBI" id="CHEBI:15377"/>
        <dbReference type="ChEBI" id="CHEBI:15378"/>
        <dbReference type="ChEBI" id="CHEBI:29985"/>
        <dbReference type="ChEBI" id="CHEBI:30616"/>
        <dbReference type="ChEBI" id="CHEBI:43474"/>
        <dbReference type="ChEBI" id="CHEBI:58359"/>
        <dbReference type="ChEBI" id="CHEBI:78515"/>
        <dbReference type="ChEBI" id="CHEBI:78516"/>
        <dbReference type="ChEBI" id="CHEBI:456216"/>
    </reaction>
</comment>
<comment type="subunit">
    <text evidence="1">Heterotrimer of A, B and C subunits.</text>
</comment>
<comment type="similarity">
    <text evidence="1">Belongs to the GatB/GatE family. GatB subfamily.</text>
</comment>